<reference key="1">
    <citation type="journal article" date="2005" name="Science">
        <title>The transcriptional landscape of the mammalian genome.</title>
        <authorList>
            <person name="Carninci P."/>
            <person name="Kasukawa T."/>
            <person name="Katayama S."/>
            <person name="Gough J."/>
            <person name="Frith M.C."/>
            <person name="Maeda N."/>
            <person name="Oyama R."/>
            <person name="Ravasi T."/>
            <person name="Lenhard B."/>
            <person name="Wells C."/>
            <person name="Kodzius R."/>
            <person name="Shimokawa K."/>
            <person name="Bajic V.B."/>
            <person name="Brenner S.E."/>
            <person name="Batalov S."/>
            <person name="Forrest A.R."/>
            <person name="Zavolan M."/>
            <person name="Davis M.J."/>
            <person name="Wilming L.G."/>
            <person name="Aidinis V."/>
            <person name="Allen J.E."/>
            <person name="Ambesi-Impiombato A."/>
            <person name="Apweiler R."/>
            <person name="Aturaliya R.N."/>
            <person name="Bailey T.L."/>
            <person name="Bansal M."/>
            <person name="Baxter L."/>
            <person name="Beisel K.W."/>
            <person name="Bersano T."/>
            <person name="Bono H."/>
            <person name="Chalk A.M."/>
            <person name="Chiu K.P."/>
            <person name="Choudhary V."/>
            <person name="Christoffels A."/>
            <person name="Clutterbuck D.R."/>
            <person name="Crowe M.L."/>
            <person name="Dalla E."/>
            <person name="Dalrymple B.P."/>
            <person name="de Bono B."/>
            <person name="Della Gatta G."/>
            <person name="di Bernardo D."/>
            <person name="Down T."/>
            <person name="Engstrom P."/>
            <person name="Fagiolini M."/>
            <person name="Faulkner G."/>
            <person name="Fletcher C.F."/>
            <person name="Fukushima T."/>
            <person name="Furuno M."/>
            <person name="Futaki S."/>
            <person name="Gariboldi M."/>
            <person name="Georgii-Hemming P."/>
            <person name="Gingeras T.R."/>
            <person name="Gojobori T."/>
            <person name="Green R.E."/>
            <person name="Gustincich S."/>
            <person name="Harbers M."/>
            <person name="Hayashi Y."/>
            <person name="Hensch T.K."/>
            <person name="Hirokawa N."/>
            <person name="Hill D."/>
            <person name="Huminiecki L."/>
            <person name="Iacono M."/>
            <person name="Ikeo K."/>
            <person name="Iwama A."/>
            <person name="Ishikawa T."/>
            <person name="Jakt M."/>
            <person name="Kanapin A."/>
            <person name="Katoh M."/>
            <person name="Kawasawa Y."/>
            <person name="Kelso J."/>
            <person name="Kitamura H."/>
            <person name="Kitano H."/>
            <person name="Kollias G."/>
            <person name="Krishnan S.P."/>
            <person name="Kruger A."/>
            <person name="Kummerfeld S.K."/>
            <person name="Kurochkin I.V."/>
            <person name="Lareau L.F."/>
            <person name="Lazarevic D."/>
            <person name="Lipovich L."/>
            <person name="Liu J."/>
            <person name="Liuni S."/>
            <person name="McWilliam S."/>
            <person name="Madan Babu M."/>
            <person name="Madera M."/>
            <person name="Marchionni L."/>
            <person name="Matsuda H."/>
            <person name="Matsuzawa S."/>
            <person name="Miki H."/>
            <person name="Mignone F."/>
            <person name="Miyake S."/>
            <person name="Morris K."/>
            <person name="Mottagui-Tabar S."/>
            <person name="Mulder N."/>
            <person name="Nakano N."/>
            <person name="Nakauchi H."/>
            <person name="Ng P."/>
            <person name="Nilsson R."/>
            <person name="Nishiguchi S."/>
            <person name="Nishikawa S."/>
            <person name="Nori F."/>
            <person name="Ohara O."/>
            <person name="Okazaki Y."/>
            <person name="Orlando V."/>
            <person name="Pang K.C."/>
            <person name="Pavan W.J."/>
            <person name="Pavesi G."/>
            <person name="Pesole G."/>
            <person name="Petrovsky N."/>
            <person name="Piazza S."/>
            <person name="Reed J."/>
            <person name="Reid J.F."/>
            <person name="Ring B.Z."/>
            <person name="Ringwald M."/>
            <person name="Rost B."/>
            <person name="Ruan Y."/>
            <person name="Salzberg S.L."/>
            <person name="Sandelin A."/>
            <person name="Schneider C."/>
            <person name="Schoenbach C."/>
            <person name="Sekiguchi K."/>
            <person name="Semple C.A."/>
            <person name="Seno S."/>
            <person name="Sessa L."/>
            <person name="Sheng Y."/>
            <person name="Shibata Y."/>
            <person name="Shimada H."/>
            <person name="Shimada K."/>
            <person name="Silva D."/>
            <person name="Sinclair B."/>
            <person name="Sperling S."/>
            <person name="Stupka E."/>
            <person name="Sugiura K."/>
            <person name="Sultana R."/>
            <person name="Takenaka Y."/>
            <person name="Taki K."/>
            <person name="Tammoja K."/>
            <person name="Tan S.L."/>
            <person name="Tang S."/>
            <person name="Taylor M.S."/>
            <person name="Tegner J."/>
            <person name="Teichmann S.A."/>
            <person name="Ueda H.R."/>
            <person name="van Nimwegen E."/>
            <person name="Verardo R."/>
            <person name="Wei C.L."/>
            <person name="Yagi K."/>
            <person name="Yamanishi H."/>
            <person name="Zabarovsky E."/>
            <person name="Zhu S."/>
            <person name="Zimmer A."/>
            <person name="Hide W."/>
            <person name="Bult C."/>
            <person name="Grimmond S.M."/>
            <person name="Teasdale R.D."/>
            <person name="Liu E.T."/>
            <person name="Brusic V."/>
            <person name="Quackenbush J."/>
            <person name="Wahlestedt C."/>
            <person name="Mattick J.S."/>
            <person name="Hume D.A."/>
            <person name="Kai C."/>
            <person name="Sasaki D."/>
            <person name="Tomaru Y."/>
            <person name="Fukuda S."/>
            <person name="Kanamori-Katayama M."/>
            <person name="Suzuki M."/>
            <person name="Aoki J."/>
            <person name="Arakawa T."/>
            <person name="Iida J."/>
            <person name="Imamura K."/>
            <person name="Itoh M."/>
            <person name="Kato T."/>
            <person name="Kawaji H."/>
            <person name="Kawagashira N."/>
            <person name="Kawashima T."/>
            <person name="Kojima M."/>
            <person name="Kondo S."/>
            <person name="Konno H."/>
            <person name="Nakano K."/>
            <person name="Ninomiya N."/>
            <person name="Nishio T."/>
            <person name="Okada M."/>
            <person name="Plessy C."/>
            <person name="Shibata K."/>
            <person name="Shiraki T."/>
            <person name="Suzuki S."/>
            <person name="Tagami M."/>
            <person name="Waki K."/>
            <person name="Watahiki A."/>
            <person name="Okamura-Oho Y."/>
            <person name="Suzuki H."/>
            <person name="Kawai J."/>
            <person name="Hayashizaki Y."/>
        </authorList>
    </citation>
    <scope>NUCLEOTIDE SEQUENCE [LARGE SCALE MRNA] (ISOFORMS 1 AND 2)</scope>
    <source>
        <strain>C57BL/6J</strain>
        <tissue>Embryo</tissue>
        <tissue>Testis</tissue>
    </source>
</reference>
<organism>
    <name type="scientific">Mus musculus</name>
    <name type="common">Mouse</name>
    <dbReference type="NCBI Taxonomy" id="10090"/>
    <lineage>
        <taxon>Eukaryota</taxon>
        <taxon>Metazoa</taxon>
        <taxon>Chordata</taxon>
        <taxon>Craniata</taxon>
        <taxon>Vertebrata</taxon>
        <taxon>Euteleostomi</taxon>
        <taxon>Mammalia</taxon>
        <taxon>Eutheria</taxon>
        <taxon>Euarchontoglires</taxon>
        <taxon>Glires</taxon>
        <taxon>Rodentia</taxon>
        <taxon>Myomorpha</taxon>
        <taxon>Muroidea</taxon>
        <taxon>Muridae</taxon>
        <taxon>Murinae</taxon>
        <taxon>Mus</taxon>
        <taxon>Mus</taxon>
    </lineage>
</organism>
<keyword id="KW-0025">Alternative splicing</keyword>
<keyword id="KW-0175">Coiled coil</keyword>
<keyword id="KW-1185">Reference proteome</keyword>
<gene>
    <name type="primary">Ccdc158</name>
</gene>
<proteinExistence type="evidence at transcript level"/>
<sequence length="1109" mass="126826">MESKACESKNEDLLPSGITSKGGSSSPFFVTSTHGTIIENTSSTGTLTQMPFFPKYEVELDSPRKSTPYPGKEHIERVLEEYSHQVKDLQRRLNESNELHEKQKFYLRQSVIDLQTKLQEMQMERDAMADIRRRESQSQEESRNQLQNTVRELEAAKCLKEDMLKDSSTQIEQLRKMMLSHEGVLQEIRSILVDFEEASGKKICEHDSMSTMHFRSLGSAISKILRELDTEISFLKGRIFPVEDQLETLKSESQNKIELLLQQHQDRIEQLISEHEVEITGLTEKASSARSQANSVQSQLEIIQEQARNQNSMYMRQLSDLESTVSQLRSELRESKRMYEDKIEELEKQLVLANSELTEARTERDQFSQESGNLDDQLQKLLADLHKREKELSLEKEQNKRLWDRDTGNSITIDHLRRELDDRNMEVQRLEALLKAMKSECQGQMERQMAAIQGKNESLEKVSSLTAQLESTKEMLRKVVEELTAKKMNLESSERTVSDLTASLQEKERAIEATNAEITKLRSRVDLKLQELQHLKNEGDHLRNVQTECEALKLQMAEKDKVIEILRQQIENMTQLVGQHGRTAGAMQVEKAQLEKEINDRKLELQEFKILKDKKDAKIRELEARVSDLELEKVKLVNAGSERLRAVKDIRHERDQLLNEVKTSRTELNHLSEDYEVLKRNFRNKSEEMESTTNRLKMQLKSAQSELEQTRNTLKTMEGSDGHAMKVAMGMQKQITAKRGQIDALQSKVQFLEEAVTSANKERHFLKEEKSKLSQELSTVATEKNKMAGELEVLRSQERRLKEKVANMEVALDKFAECQDIIQRQEQESVRLKLQHTLDVKELQGPGYTSNSSVKPRLLQPASVTRSHSNIPSSQSTTSFLSHHSIKTNTPKEDPTRDLKQLLQELRTVINEEPAMALSKTEEDGRTPSLGALEDRVRDCITESSLRAELCHRSNNSLRESTEGSKSSETLSREPVPLHPGDLEDPSSCFTFTSTASPSGKMSASRSFSSSPKKSPVHSLLTSSAEESVNSTPQYRSTKPIHSPTSAKDSQSPSLETTGKTCQKLQNRLESLQTLVEDLQLKNQAMSSMIRNQEKRIQKVKDQEKMLLK</sequence>
<comment type="alternative products">
    <event type="alternative splicing"/>
    <isoform>
        <id>Q8CDI6-1</id>
        <name>1</name>
        <sequence type="displayed"/>
    </isoform>
    <isoform>
        <id>Q8CDI6-2</id>
        <name>2</name>
        <sequence type="described" ref="VSP_032393 VSP_032394"/>
    </isoform>
</comment>
<accession>Q8CDI6</accession>
<accession>Q3TU97</accession>
<feature type="chain" id="PRO_0000325761" description="Coiled-coil domain-containing protein 158">
    <location>
        <begin position="1"/>
        <end position="1109"/>
    </location>
</feature>
<feature type="region of interest" description="Disordered" evidence="2">
    <location>
        <begin position="1"/>
        <end position="31"/>
    </location>
</feature>
<feature type="region of interest" description="Disordered" evidence="2">
    <location>
        <begin position="843"/>
        <end position="897"/>
    </location>
</feature>
<feature type="region of interest" description="Disordered" evidence="2">
    <location>
        <begin position="952"/>
        <end position="1061"/>
    </location>
</feature>
<feature type="coiled-coil region" evidence="1">
    <location>
        <begin position="71"/>
        <end position="166"/>
    </location>
</feature>
<feature type="coiled-coil region" evidence="1">
    <location>
        <begin position="242"/>
        <end position="828"/>
    </location>
</feature>
<feature type="coiled-coil region" evidence="1">
    <location>
        <begin position="1053"/>
        <end position="1109"/>
    </location>
</feature>
<feature type="compositionally biased region" description="Basic and acidic residues" evidence="2">
    <location>
        <begin position="1"/>
        <end position="12"/>
    </location>
</feature>
<feature type="compositionally biased region" description="Polar residues" evidence="2">
    <location>
        <begin position="17"/>
        <end position="31"/>
    </location>
</feature>
<feature type="compositionally biased region" description="Polar residues" evidence="2">
    <location>
        <begin position="862"/>
        <end position="882"/>
    </location>
</feature>
<feature type="compositionally biased region" description="Polar residues" evidence="2">
    <location>
        <begin position="953"/>
        <end position="970"/>
    </location>
</feature>
<feature type="compositionally biased region" description="Polar residues" evidence="2">
    <location>
        <begin position="988"/>
        <end position="998"/>
    </location>
</feature>
<feature type="compositionally biased region" description="Low complexity" evidence="2">
    <location>
        <begin position="999"/>
        <end position="1019"/>
    </location>
</feature>
<feature type="compositionally biased region" description="Polar residues" evidence="2">
    <location>
        <begin position="1020"/>
        <end position="1037"/>
    </location>
</feature>
<feature type="compositionally biased region" description="Polar residues" evidence="2">
    <location>
        <begin position="1043"/>
        <end position="1061"/>
    </location>
</feature>
<feature type="splice variant" id="VSP_032393" description="In isoform 2." evidence="3">
    <original>IEELEKQLVLAN</original>
    <variation>EPPEFPFTNLDQ</variation>
    <location>
        <begin position="343"/>
        <end position="354"/>
    </location>
</feature>
<feature type="splice variant" id="VSP_032394" description="In isoform 2." evidence="3">
    <location>
        <begin position="355"/>
        <end position="1109"/>
    </location>
</feature>
<evidence type="ECO:0000255" key="1"/>
<evidence type="ECO:0000256" key="2">
    <source>
        <dbReference type="SAM" id="MobiDB-lite"/>
    </source>
</evidence>
<evidence type="ECO:0000303" key="3">
    <source>
    </source>
</evidence>
<dbReference type="EMBL" id="AK029997">
    <property type="protein sequence ID" value="BAC26724.1"/>
    <property type="molecule type" value="mRNA"/>
</dbReference>
<dbReference type="EMBL" id="AK160895">
    <property type="protein sequence ID" value="BAE36074.1"/>
    <property type="molecule type" value="mRNA"/>
</dbReference>
<dbReference type="CCDS" id="CCDS19434.1">
    <molecule id="Q8CDI6-1"/>
</dbReference>
<dbReference type="CCDS" id="CCDS89939.1">
    <molecule id="Q8CDI6-2"/>
</dbReference>
<dbReference type="RefSeq" id="NP_001346948.1">
    <molecule id="Q8CDI6-2"/>
    <property type="nucleotide sequence ID" value="NM_001360019.1"/>
</dbReference>
<dbReference type="RefSeq" id="NP_001346949.1">
    <molecule id="Q8CDI6-2"/>
    <property type="nucleotide sequence ID" value="NM_001360020.1"/>
</dbReference>
<dbReference type="RefSeq" id="NP_796204.1">
    <molecule id="Q8CDI6-1"/>
    <property type="nucleotide sequence ID" value="NM_177230.3"/>
</dbReference>
<dbReference type="RefSeq" id="XP_030110437.1">
    <molecule id="Q8CDI6-2"/>
    <property type="nucleotide sequence ID" value="XM_030254577.2"/>
</dbReference>
<dbReference type="SMR" id="Q8CDI6"/>
<dbReference type="BioGRID" id="236222">
    <property type="interactions" value="7"/>
</dbReference>
<dbReference type="FunCoup" id="Q8CDI6">
    <property type="interactions" value="21"/>
</dbReference>
<dbReference type="STRING" id="10090.ENSMUSP00000063050"/>
<dbReference type="GlyGen" id="Q8CDI6">
    <property type="glycosylation" value="2 sites, 1 O-linked glycan (2 sites)"/>
</dbReference>
<dbReference type="iPTMnet" id="Q8CDI6"/>
<dbReference type="PhosphoSitePlus" id="Q8CDI6"/>
<dbReference type="PaxDb" id="10090-ENSMUSP00000063050"/>
<dbReference type="ProteomicsDB" id="281260">
    <molecule id="Q8CDI6-1"/>
</dbReference>
<dbReference type="ProteomicsDB" id="281261">
    <molecule id="Q8CDI6-2"/>
</dbReference>
<dbReference type="Antibodypedia" id="6349">
    <property type="antibodies" value="72 antibodies from 18 providers"/>
</dbReference>
<dbReference type="DNASU" id="320696"/>
<dbReference type="Ensembl" id="ENSMUST00000060930.10">
    <molecule id="Q8CDI6-1"/>
    <property type="protein sequence ID" value="ENSMUSP00000063050.4"/>
    <property type="gene ID" value="ENSMUSG00000050050.18"/>
</dbReference>
<dbReference type="Ensembl" id="ENSMUST00000150359.2">
    <molecule id="Q8CDI6-2"/>
    <property type="protein sequence ID" value="ENSMUSP00000123259.2"/>
    <property type="gene ID" value="ENSMUSG00000050050.18"/>
</dbReference>
<dbReference type="Ensembl" id="ENSMUST00000151180.8">
    <molecule id="Q8CDI6-2"/>
    <property type="protein sequence ID" value="ENSMUSP00000117894.2"/>
    <property type="gene ID" value="ENSMUSG00000050050.18"/>
</dbReference>
<dbReference type="GeneID" id="320696"/>
<dbReference type="KEGG" id="mmu:320696"/>
<dbReference type="UCSC" id="uc008ydr.1">
    <molecule id="Q8CDI6-1"/>
    <property type="organism name" value="mouse"/>
</dbReference>
<dbReference type="UCSC" id="uc008yds.1">
    <molecule id="Q8CDI6-2"/>
    <property type="organism name" value="mouse"/>
</dbReference>
<dbReference type="AGR" id="MGI:2444555"/>
<dbReference type="CTD" id="339965"/>
<dbReference type="MGI" id="MGI:2444555">
    <property type="gene designation" value="Ccdc158"/>
</dbReference>
<dbReference type="VEuPathDB" id="HostDB:ENSMUSG00000050050"/>
<dbReference type="eggNOG" id="ENOG502QX0B">
    <property type="taxonomic scope" value="Eukaryota"/>
</dbReference>
<dbReference type="GeneTree" id="ENSGT00390000013339"/>
<dbReference type="HOGENOM" id="CLU_009414_0_0_1"/>
<dbReference type="InParanoid" id="Q8CDI6"/>
<dbReference type="OMA" id="CIIQCQE"/>
<dbReference type="PhylomeDB" id="Q8CDI6"/>
<dbReference type="TreeFam" id="TF337019"/>
<dbReference type="BioGRID-ORCS" id="320696">
    <property type="hits" value="3 hits in 76 CRISPR screens"/>
</dbReference>
<dbReference type="ChiTaRS" id="Ccdc158">
    <property type="organism name" value="mouse"/>
</dbReference>
<dbReference type="PRO" id="PR:Q8CDI6"/>
<dbReference type="Proteomes" id="UP000000589">
    <property type="component" value="Chromosome 5"/>
</dbReference>
<dbReference type="RNAct" id="Q8CDI6">
    <property type="molecule type" value="protein"/>
</dbReference>
<dbReference type="Bgee" id="ENSMUSG00000050050">
    <property type="expression patterns" value="Expressed in spermatocyte and 67 other cell types or tissues"/>
</dbReference>
<dbReference type="ExpressionAtlas" id="Q8CDI6">
    <property type="expression patterns" value="baseline and differential"/>
</dbReference>
<dbReference type="Gene3D" id="1.20.5.340">
    <property type="match status" value="1"/>
</dbReference>
<dbReference type="InterPro" id="IPR031809">
    <property type="entry name" value="CCDC158"/>
</dbReference>
<dbReference type="PANTHER" id="PTHR47615">
    <property type="entry name" value="COILED-COIL DOMAIN-CONTAINING PROTEIN 158"/>
    <property type="match status" value="1"/>
</dbReference>
<dbReference type="PANTHER" id="PTHR47615:SF1">
    <property type="entry name" value="COILED-COIL DOMAIN-CONTAINING PROTEIN 158"/>
    <property type="match status" value="1"/>
</dbReference>
<dbReference type="Pfam" id="PF15921">
    <property type="entry name" value="CCDC158"/>
    <property type="match status" value="1"/>
</dbReference>
<protein>
    <recommendedName>
        <fullName>Coiled-coil domain-containing protein 158</fullName>
    </recommendedName>
</protein>
<name>CD158_MOUSE</name>